<comment type="function">
    <text>GTP-binding protein involved in protein trafficking; may modulate vesicle budding and uncoating within the Golgi apparatus.</text>
</comment>
<comment type="subcellular location">
    <subcellularLocation>
        <location>Golgi apparatus</location>
    </subcellularLocation>
</comment>
<comment type="similarity">
    <text evidence="3">Belongs to the small GTPase superfamily. Arf family.</text>
</comment>
<sequence length="181" mass="20708">MGLTFTKLFSRLFAKKEMRILMVGLDAAGKTTILYKLKLGEIVTTIPTIGFNVETVEYKNISFTVWDVGGQDKIRPLWRHYFQNTQGLIFVVDSNDRERVVEARDELHRMLNEDELRDAVLLVFANKQDLPNAMNAAEITDKLGLHSLRQRHWYIQSTCATSGEGLYEGLDWLSNNIANKA</sequence>
<organism>
    <name type="scientific">Oryza sativa subsp. japonica</name>
    <name type="common">Rice</name>
    <dbReference type="NCBI Taxonomy" id="39947"/>
    <lineage>
        <taxon>Eukaryota</taxon>
        <taxon>Viridiplantae</taxon>
        <taxon>Streptophyta</taxon>
        <taxon>Embryophyta</taxon>
        <taxon>Tracheophyta</taxon>
        <taxon>Spermatophyta</taxon>
        <taxon>Magnoliopsida</taxon>
        <taxon>Liliopsida</taxon>
        <taxon>Poales</taxon>
        <taxon>Poaceae</taxon>
        <taxon>BOP clade</taxon>
        <taxon>Oryzoideae</taxon>
        <taxon>Oryzeae</taxon>
        <taxon>Oryzinae</taxon>
        <taxon>Oryza</taxon>
        <taxon>Oryza sativa</taxon>
    </lineage>
</organism>
<feature type="initiator methionine" description="Removed" evidence="2">
    <location>
        <position position="1"/>
    </location>
</feature>
<feature type="chain" id="PRO_0000207436" description="ADP-ribosylation factor 2">
    <location>
        <begin position="2"/>
        <end position="181"/>
    </location>
</feature>
<feature type="binding site" evidence="1">
    <location>
        <begin position="24"/>
        <end position="31"/>
    </location>
    <ligand>
        <name>GTP</name>
        <dbReference type="ChEBI" id="CHEBI:37565"/>
    </ligand>
</feature>
<feature type="binding site" evidence="1">
    <location>
        <begin position="67"/>
        <end position="71"/>
    </location>
    <ligand>
        <name>GTP</name>
        <dbReference type="ChEBI" id="CHEBI:37565"/>
    </ligand>
</feature>
<feature type="binding site" evidence="1">
    <location>
        <begin position="126"/>
        <end position="129"/>
    </location>
    <ligand>
        <name>GTP</name>
        <dbReference type="ChEBI" id="CHEBI:37565"/>
    </ligand>
</feature>
<feature type="lipid moiety-binding region" description="N-myristoyl glycine" evidence="2">
    <location>
        <position position="2"/>
    </location>
</feature>
<dbReference type="EMBL" id="D17760">
    <property type="protein sequence ID" value="BAA04607.1"/>
    <property type="molecule type" value="mRNA"/>
</dbReference>
<dbReference type="EMBL" id="AC097175">
    <property type="protein sequence ID" value="AAT77289.1"/>
    <property type="molecule type" value="Genomic_DNA"/>
</dbReference>
<dbReference type="EMBL" id="AP014961">
    <property type="protein sequence ID" value="BAS94643.1"/>
    <property type="molecule type" value="Genomic_DNA"/>
</dbReference>
<dbReference type="PIR" id="T52341">
    <property type="entry name" value="T52341"/>
</dbReference>
<dbReference type="RefSeq" id="XP_015638732.1">
    <property type="nucleotide sequence ID" value="XM_015783246.1"/>
</dbReference>
<dbReference type="SMR" id="P51823"/>
<dbReference type="FunCoup" id="P51823">
    <property type="interactions" value="3295"/>
</dbReference>
<dbReference type="STRING" id="39947.P51823"/>
<dbReference type="PaxDb" id="39947-P51823"/>
<dbReference type="EnsemblPlants" id="Os05t0489600-01">
    <property type="protein sequence ID" value="Os05t0489600-01"/>
    <property type="gene ID" value="Os05g0489600"/>
</dbReference>
<dbReference type="EnsemblPlants" id="Os05t0489600-03">
    <property type="protein sequence ID" value="Os05t0489600-03"/>
    <property type="gene ID" value="Os05g0489600"/>
</dbReference>
<dbReference type="Gramene" id="Os05t0489600-01">
    <property type="protein sequence ID" value="Os05t0489600-01"/>
    <property type="gene ID" value="Os05g0489600"/>
</dbReference>
<dbReference type="Gramene" id="Os05t0489600-03">
    <property type="protein sequence ID" value="Os05t0489600-03"/>
    <property type="gene ID" value="Os05g0489600"/>
</dbReference>
<dbReference type="eggNOG" id="KOG0070">
    <property type="taxonomic scope" value="Eukaryota"/>
</dbReference>
<dbReference type="HOGENOM" id="CLU_040729_9_3_1"/>
<dbReference type="InParanoid" id="P51823"/>
<dbReference type="OMA" id="IRQRHWF"/>
<dbReference type="OrthoDB" id="2011769at2759"/>
<dbReference type="Proteomes" id="UP000000763">
    <property type="component" value="Chromosome 5"/>
</dbReference>
<dbReference type="Proteomes" id="UP000059680">
    <property type="component" value="Chromosome 5"/>
</dbReference>
<dbReference type="ExpressionAtlas" id="P51823">
    <property type="expression patterns" value="baseline and differential"/>
</dbReference>
<dbReference type="GO" id="GO:0005737">
    <property type="term" value="C:cytoplasm"/>
    <property type="evidence" value="ECO:0000318"/>
    <property type="project" value="GO_Central"/>
</dbReference>
<dbReference type="GO" id="GO:0005794">
    <property type="term" value="C:Golgi apparatus"/>
    <property type="evidence" value="ECO:0007669"/>
    <property type="project" value="UniProtKB-SubCell"/>
</dbReference>
<dbReference type="GO" id="GO:0005525">
    <property type="term" value="F:GTP binding"/>
    <property type="evidence" value="ECO:0000318"/>
    <property type="project" value="GO_Central"/>
</dbReference>
<dbReference type="GO" id="GO:0003924">
    <property type="term" value="F:GTPase activity"/>
    <property type="evidence" value="ECO:0007669"/>
    <property type="project" value="InterPro"/>
</dbReference>
<dbReference type="GO" id="GO:0006886">
    <property type="term" value="P:intracellular protein transport"/>
    <property type="evidence" value="ECO:0000318"/>
    <property type="project" value="GO_Central"/>
</dbReference>
<dbReference type="GO" id="GO:0016192">
    <property type="term" value="P:vesicle-mediated transport"/>
    <property type="evidence" value="ECO:0000318"/>
    <property type="project" value="GO_Central"/>
</dbReference>
<dbReference type="CDD" id="cd04150">
    <property type="entry name" value="Arf1_5_like"/>
    <property type="match status" value="1"/>
</dbReference>
<dbReference type="FunFam" id="3.40.50.300:FF:003500">
    <property type="entry name" value="ADP-ribosylation factor 1"/>
    <property type="match status" value="1"/>
</dbReference>
<dbReference type="Gene3D" id="3.40.50.300">
    <property type="entry name" value="P-loop containing nucleotide triphosphate hydrolases"/>
    <property type="match status" value="1"/>
</dbReference>
<dbReference type="InterPro" id="IPR045872">
    <property type="entry name" value="Arf1-5-like"/>
</dbReference>
<dbReference type="InterPro" id="IPR027417">
    <property type="entry name" value="P-loop_NTPase"/>
</dbReference>
<dbReference type="InterPro" id="IPR005225">
    <property type="entry name" value="Small_GTP-bd"/>
</dbReference>
<dbReference type="InterPro" id="IPR024156">
    <property type="entry name" value="Small_GTPase_ARF"/>
</dbReference>
<dbReference type="InterPro" id="IPR006689">
    <property type="entry name" value="Small_GTPase_ARF/SAR"/>
</dbReference>
<dbReference type="NCBIfam" id="TIGR00231">
    <property type="entry name" value="small_GTP"/>
    <property type="match status" value="1"/>
</dbReference>
<dbReference type="PANTHER" id="PTHR11711">
    <property type="entry name" value="ADP RIBOSYLATION FACTOR-RELATED"/>
    <property type="match status" value="1"/>
</dbReference>
<dbReference type="Pfam" id="PF00025">
    <property type="entry name" value="Arf"/>
    <property type="match status" value="1"/>
</dbReference>
<dbReference type="PRINTS" id="PR00328">
    <property type="entry name" value="SAR1GTPBP"/>
</dbReference>
<dbReference type="SMART" id="SM00177">
    <property type="entry name" value="ARF"/>
    <property type="match status" value="1"/>
</dbReference>
<dbReference type="SMART" id="SM00175">
    <property type="entry name" value="RAB"/>
    <property type="match status" value="1"/>
</dbReference>
<dbReference type="SMART" id="SM00178">
    <property type="entry name" value="SAR"/>
    <property type="match status" value="1"/>
</dbReference>
<dbReference type="SUPFAM" id="SSF52540">
    <property type="entry name" value="P-loop containing nucleoside triphosphate hydrolases"/>
    <property type="match status" value="1"/>
</dbReference>
<dbReference type="PROSITE" id="PS51417">
    <property type="entry name" value="ARF"/>
    <property type="match status" value="1"/>
</dbReference>
<name>ARF2_ORYSJ</name>
<reference key="1">
    <citation type="journal article" date="1994" name="Plant Sci.">
        <title>Molecular cloning and characterization of a cDNA encoding a small GTP-binding protein related to mammalian ADP-ribosylation factor from rice.</title>
        <authorList>
            <person name="Higo H."/>
            <person name="Kishimoto N."/>
            <person name="Saito A."/>
            <person name="Higo K."/>
        </authorList>
    </citation>
    <scope>NUCLEOTIDE SEQUENCE [MRNA]</scope>
    <source>
        <strain>cv. Nipponbare</strain>
        <tissue>Callus</tissue>
    </source>
</reference>
<reference key="2">
    <citation type="journal article" date="2005" name="Mol. Genet. Genomics">
        <title>A fine physical map of the rice chromosome 5.</title>
        <authorList>
            <person name="Cheng C.-H."/>
            <person name="Chung M.C."/>
            <person name="Liu S.-M."/>
            <person name="Chen S.-K."/>
            <person name="Kao F.Y."/>
            <person name="Lin S.-J."/>
            <person name="Hsiao S.-H."/>
            <person name="Tseng I.C."/>
            <person name="Hsing Y.-I.C."/>
            <person name="Wu H.-P."/>
            <person name="Chen C.-S."/>
            <person name="Shaw J.-F."/>
            <person name="Wu J."/>
            <person name="Matsumoto T."/>
            <person name="Sasaki T."/>
            <person name="Chen H.-C."/>
            <person name="Chow T.-Y."/>
        </authorList>
    </citation>
    <scope>NUCLEOTIDE SEQUENCE [LARGE SCALE GENOMIC DNA]</scope>
    <source>
        <strain>cv. Nipponbare</strain>
    </source>
</reference>
<reference key="3">
    <citation type="journal article" date="2005" name="Nature">
        <title>The map-based sequence of the rice genome.</title>
        <authorList>
            <consortium name="International rice genome sequencing project (IRGSP)"/>
        </authorList>
    </citation>
    <scope>NUCLEOTIDE SEQUENCE [LARGE SCALE GENOMIC DNA]</scope>
    <source>
        <strain>cv. Nipponbare</strain>
    </source>
</reference>
<reference key="4">
    <citation type="journal article" date="2013" name="Rice">
        <title>Improvement of the Oryza sativa Nipponbare reference genome using next generation sequence and optical map data.</title>
        <authorList>
            <person name="Kawahara Y."/>
            <person name="de la Bastide M."/>
            <person name="Hamilton J.P."/>
            <person name="Kanamori H."/>
            <person name="McCombie W.R."/>
            <person name="Ouyang S."/>
            <person name="Schwartz D.C."/>
            <person name="Tanaka T."/>
            <person name="Wu J."/>
            <person name="Zhou S."/>
            <person name="Childs K.L."/>
            <person name="Davidson R.M."/>
            <person name="Lin H."/>
            <person name="Quesada-Ocampo L."/>
            <person name="Vaillancourt B."/>
            <person name="Sakai H."/>
            <person name="Lee S.S."/>
            <person name="Kim J."/>
            <person name="Numa H."/>
            <person name="Itoh T."/>
            <person name="Buell C.R."/>
            <person name="Matsumoto T."/>
        </authorList>
    </citation>
    <scope>GENOME REANNOTATION</scope>
    <source>
        <strain>cv. Nipponbare</strain>
    </source>
</reference>
<proteinExistence type="evidence at transcript level"/>
<gene>
    <name type="primary">ARF</name>
    <name type="ordered locus">Os05g0489600</name>
    <name type="ordered locus">LOC_Os05g41060</name>
    <name type="ORF">OJ1119_H02.17</name>
</gene>
<accession>P51823</accession>
<accession>Q6AVM6</accession>
<evidence type="ECO:0000250" key="1"/>
<evidence type="ECO:0000255" key="2"/>
<evidence type="ECO:0000305" key="3"/>
<protein>
    <recommendedName>
        <fullName>ADP-ribosylation factor 2</fullName>
    </recommendedName>
</protein>
<keyword id="KW-0931">ER-Golgi transport</keyword>
<keyword id="KW-0333">Golgi apparatus</keyword>
<keyword id="KW-0342">GTP-binding</keyword>
<keyword id="KW-0449">Lipoprotein</keyword>
<keyword id="KW-0519">Myristate</keyword>
<keyword id="KW-0547">Nucleotide-binding</keyword>
<keyword id="KW-0653">Protein transport</keyword>
<keyword id="KW-1185">Reference proteome</keyword>
<keyword id="KW-0813">Transport</keyword>